<evidence type="ECO:0000250" key="1"/>
<evidence type="ECO:0000256" key="2">
    <source>
        <dbReference type="SAM" id="MobiDB-lite"/>
    </source>
</evidence>
<evidence type="ECO:0000305" key="3"/>
<feature type="chain" id="PRO_0000315953" description="Lysine--tRNA ligase, cytoplasmic">
    <location>
        <begin position="1"/>
        <end position="591"/>
    </location>
</feature>
<feature type="region of interest" description="Disordered" evidence="2">
    <location>
        <begin position="24"/>
        <end position="79"/>
    </location>
</feature>
<feature type="compositionally biased region" description="Basic and acidic residues" evidence="2">
    <location>
        <begin position="27"/>
        <end position="50"/>
    </location>
</feature>
<feature type="compositionally biased region" description="Low complexity" evidence="2">
    <location>
        <begin position="51"/>
        <end position="62"/>
    </location>
</feature>
<dbReference type="EC" id="6.1.1.6"/>
<dbReference type="EMBL" id="CU329671">
    <property type="protein sequence ID" value="CAB52801.1"/>
    <property type="molecule type" value="Genomic_DNA"/>
</dbReference>
<dbReference type="PIR" id="T39726">
    <property type="entry name" value="T39726"/>
</dbReference>
<dbReference type="RefSeq" id="NP_595892.1">
    <property type="nucleotide sequence ID" value="NM_001021799.2"/>
</dbReference>
<dbReference type="SMR" id="Q9UUE6"/>
<dbReference type="BioGRID" id="276298">
    <property type="interactions" value="4"/>
</dbReference>
<dbReference type="FunCoup" id="Q9UUE6">
    <property type="interactions" value="1027"/>
</dbReference>
<dbReference type="STRING" id="284812.Q9UUE6"/>
<dbReference type="iPTMnet" id="Q9UUE6"/>
<dbReference type="PaxDb" id="4896-SPBC17G9.03c.1"/>
<dbReference type="EnsemblFungi" id="SPBC17G9.03c.1">
    <property type="protein sequence ID" value="SPBC17G9.03c.1:pep"/>
    <property type="gene ID" value="SPBC17G9.03c"/>
</dbReference>
<dbReference type="GeneID" id="2539746"/>
<dbReference type="KEGG" id="spo:2539746"/>
<dbReference type="PomBase" id="SPBC17G9.03c">
    <property type="gene designation" value="krs1"/>
</dbReference>
<dbReference type="VEuPathDB" id="FungiDB:SPBC17G9.03c"/>
<dbReference type="eggNOG" id="KOG1885">
    <property type="taxonomic scope" value="Eukaryota"/>
</dbReference>
<dbReference type="HOGENOM" id="CLU_008255_6_0_1"/>
<dbReference type="InParanoid" id="Q9UUE6"/>
<dbReference type="OMA" id="DFRNEGM"/>
<dbReference type="PhylomeDB" id="Q9UUE6"/>
<dbReference type="PRO" id="PR:Q9UUE6"/>
<dbReference type="Proteomes" id="UP000002485">
    <property type="component" value="Chromosome II"/>
</dbReference>
<dbReference type="GO" id="GO:0005737">
    <property type="term" value="C:cytoplasm"/>
    <property type="evidence" value="ECO:0000318"/>
    <property type="project" value="GO_Central"/>
</dbReference>
<dbReference type="GO" id="GO:0005524">
    <property type="term" value="F:ATP binding"/>
    <property type="evidence" value="ECO:0007669"/>
    <property type="project" value="UniProtKB-KW"/>
</dbReference>
<dbReference type="GO" id="GO:0004824">
    <property type="term" value="F:lysine-tRNA ligase activity"/>
    <property type="evidence" value="ECO:0000318"/>
    <property type="project" value="GO_Central"/>
</dbReference>
<dbReference type="GO" id="GO:0000049">
    <property type="term" value="F:tRNA binding"/>
    <property type="evidence" value="ECO:0000318"/>
    <property type="project" value="GO_Central"/>
</dbReference>
<dbReference type="GO" id="GO:0002181">
    <property type="term" value="P:cytoplasmic translation"/>
    <property type="evidence" value="ECO:0000303"/>
    <property type="project" value="PomBase"/>
</dbReference>
<dbReference type="GO" id="GO:0006430">
    <property type="term" value="P:lysyl-tRNA aminoacylation"/>
    <property type="evidence" value="ECO:0000318"/>
    <property type="project" value="GO_Central"/>
</dbReference>
<dbReference type="CDD" id="cd00775">
    <property type="entry name" value="LysRS_core"/>
    <property type="match status" value="1"/>
</dbReference>
<dbReference type="CDD" id="cd04322">
    <property type="entry name" value="LysRS_N"/>
    <property type="match status" value="1"/>
</dbReference>
<dbReference type="FunFam" id="2.40.50.140:FF:000050">
    <property type="entry name" value="Lysine--tRNA ligase"/>
    <property type="match status" value="1"/>
</dbReference>
<dbReference type="FunFam" id="3.30.930.10:FF:000044">
    <property type="entry name" value="Lysine--tRNA ligase"/>
    <property type="match status" value="1"/>
</dbReference>
<dbReference type="Gene3D" id="3.30.930.10">
    <property type="entry name" value="Bira Bifunctional Protein, Domain 2"/>
    <property type="match status" value="1"/>
</dbReference>
<dbReference type="Gene3D" id="2.40.50.140">
    <property type="entry name" value="Nucleic acid-binding proteins"/>
    <property type="match status" value="1"/>
</dbReference>
<dbReference type="HAMAP" id="MF_00252">
    <property type="entry name" value="Lys_tRNA_synth_class2"/>
    <property type="match status" value="1"/>
</dbReference>
<dbReference type="InterPro" id="IPR004364">
    <property type="entry name" value="Aa-tRNA-synt_II"/>
</dbReference>
<dbReference type="InterPro" id="IPR006195">
    <property type="entry name" value="aa-tRNA-synth_II"/>
</dbReference>
<dbReference type="InterPro" id="IPR045864">
    <property type="entry name" value="aa-tRNA-synth_II/BPL/LPL"/>
</dbReference>
<dbReference type="InterPro" id="IPR002313">
    <property type="entry name" value="Lys-tRNA-ligase_II"/>
</dbReference>
<dbReference type="InterPro" id="IPR034762">
    <property type="entry name" value="Lys-tRNA-ligase_II_bac/euk"/>
</dbReference>
<dbReference type="InterPro" id="IPR044136">
    <property type="entry name" value="Lys-tRNA-ligase_II_N"/>
</dbReference>
<dbReference type="InterPro" id="IPR018149">
    <property type="entry name" value="Lys-tRNA-synth_II_C"/>
</dbReference>
<dbReference type="InterPro" id="IPR012340">
    <property type="entry name" value="NA-bd_OB-fold"/>
</dbReference>
<dbReference type="InterPro" id="IPR004365">
    <property type="entry name" value="NA-bd_OB_tRNA"/>
</dbReference>
<dbReference type="NCBIfam" id="TIGR00499">
    <property type="entry name" value="lysS_bact"/>
    <property type="match status" value="1"/>
</dbReference>
<dbReference type="NCBIfam" id="NF001756">
    <property type="entry name" value="PRK00484.1"/>
    <property type="match status" value="1"/>
</dbReference>
<dbReference type="PANTHER" id="PTHR42918:SF9">
    <property type="entry name" value="LYSINE--TRNA LIGASE"/>
    <property type="match status" value="1"/>
</dbReference>
<dbReference type="PANTHER" id="PTHR42918">
    <property type="entry name" value="LYSYL-TRNA SYNTHETASE"/>
    <property type="match status" value="1"/>
</dbReference>
<dbReference type="Pfam" id="PF00152">
    <property type="entry name" value="tRNA-synt_2"/>
    <property type="match status" value="1"/>
</dbReference>
<dbReference type="Pfam" id="PF01336">
    <property type="entry name" value="tRNA_anti-codon"/>
    <property type="match status" value="1"/>
</dbReference>
<dbReference type="PIRSF" id="PIRSF039101">
    <property type="entry name" value="LysRS2"/>
    <property type="match status" value="1"/>
</dbReference>
<dbReference type="PRINTS" id="PR00982">
    <property type="entry name" value="TRNASYNTHLYS"/>
</dbReference>
<dbReference type="SUPFAM" id="SSF55681">
    <property type="entry name" value="Class II aaRS and biotin synthetases"/>
    <property type="match status" value="1"/>
</dbReference>
<dbReference type="SUPFAM" id="SSF50249">
    <property type="entry name" value="Nucleic acid-binding proteins"/>
    <property type="match status" value="1"/>
</dbReference>
<dbReference type="PROSITE" id="PS50862">
    <property type="entry name" value="AA_TRNA_LIGASE_II"/>
    <property type="match status" value="1"/>
</dbReference>
<accession>Q9UUE6</accession>
<protein>
    <recommendedName>
        <fullName>Lysine--tRNA ligase, cytoplasmic</fullName>
        <ecNumber>6.1.1.6</ecNumber>
    </recommendedName>
    <alternativeName>
        <fullName>Lysyl-tRNA synthetase</fullName>
        <shortName>LysRS</shortName>
    </alternativeName>
</protein>
<proteinExistence type="inferred from homology"/>
<keyword id="KW-0030">Aminoacyl-tRNA synthetase</keyword>
<keyword id="KW-0067">ATP-binding</keyword>
<keyword id="KW-0963">Cytoplasm</keyword>
<keyword id="KW-0436">Ligase</keyword>
<keyword id="KW-0547">Nucleotide-binding</keyword>
<keyword id="KW-0648">Protein biosynthesis</keyword>
<keyword id="KW-1185">Reference proteome</keyword>
<name>SYKC_SCHPO</name>
<sequence>MSEEQVNGVTQAVKALVLDPVTGEQVSKTELKKREKQRARELAKAKKQAEKAASAPVAAPKSSSKKEEDLDPSQYFENRSRTIMELRQTKDPNPYPHKFQVTITLPEFIAKYEGLARGETKPEVEVAVAGRVLGLRTAGNKLRFYEIHADGKKLQVMCQAQDADTVDFAAQHEHLRRGDIIGIRGYPGRSNPKGRADGELSIFARQCVLLSPCLRMLPKEHYGLKDLEIRHRQRYLDLIMNRSTRDRFVMRSRIIQYIRHFFDSRDFMEVETPMMNMIAGGATAKPFVTHHNDLDMDLYMRIAPELYLKMLVVGGLDRVYEIGRQFRNEGADLTHNPEFTSIEFYQAYADYYDLMDTTEELLSGLVKDLTGSYKVPYHPEGPEGPKWELDFSRPWRRINMIEYLEEKLNTKFPPGDQLHTPEANAFLRDLCAKHGVECAPPQTCSRLLDKLVGEFIESECINPTFIIGHPQMMSPLAKYHRSDAGLCERFEAFVATKEICNAYTELNDIFDQRARFEEQARQKAQGDDEAQIIDENFCTALEYGLPPTGGWGMGVDRLVMFLTDSNTIREVLLFPHMKPEVQAAEPTVVKE</sequence>
<gene>
    <name type="primary">krs1</name>
    <name type="ORF">SPBC17G9.03c</name>
</gene>
<reference key="1">
    <citation type="journal article" date="2002" name="Nature">
        <title>The genome sequence of Schizosaccharomyces pombe.</title>
        <authorList>
            <person name="Wood V."/>
            <person name="Gwilliam R."/>
            <person name="Rajandream M.A."/>
            <person name="Lyne M.H."/>
            <person name="Lyne R."/>
            <person name="Stewart A."/>
            <person name="Sgouros J.G."/>
            <person name="Peat N."/>
            <person name="Hayles J."/>
            <person name="Baker S.G."/>
            <person name="Basham D."/>
            <person name="Bowman S."/>
            <person name="Brooks K."/>
            <person name="Brown D."/>
            <person name="Brown S."/>
            <person name="Chillingworth T."/>
            <person name="Churcher C.M."/>
            <person name="Collins M."/>
            <person name="Connor R."/>
            <person name="Cronin A."/>
            <person name="Davis P."/>
            <person name="Feltwell T."/>
            <person name="Fraser A."/>
            <person name="Gentles S."/>
            <person name="Goble A."/>
            <person name="Hamlin N."/>
            <person name="Harris D.E."/>
            <person name="Hidalgo J."/>
            <person name="Hodgson G."/>
            <person name="Holroyd S."/>
            <person name="Hornsby T."/>
            <person name="Howarth S."/>
            <person name="Huckle E.J."/>
            <person name="Hunt S."/>
            <person name="Jagels K."/>
            <person name="James K.D."/>
            <person name="Jones L."/>
            <person name="Jones M."/>
            <person name="Leather S."/>
            <person name="McDonald S."/>
            <person name="McLean J."/>
            <person name="Mooney P."/>
            <person name="Moule S."/>
            <person name="Mungall K.L."/>
            <person name="Murphy L.D."/>
            <person name="Niblett D."/>
            <person name="Odell C."/>
            <person name="Oliver K."/>
            <person name="O'Neil S."/>
            <person name="Pearson D."/>
            <person name="Quail M.A."/>
            <person name="Rabbinowitsch E."/>
            <person name="Rutherford K.M."/>
            <person name="Rutter S."/>
            <person name="Saunders D."/>
            <person name="Seeger K."/>
            <person name="Sharp S."/>
            <person name="Skelton J."/>
            <person name="Simmonds M.N."/>
            <person name="Squares R."/>
            <person name="Squares S."/>
            <person name="Stevens K."/>
            <person name="Taylor K."/>
            <person name="Taylor R.G."/>
            <person name="Tivey A."/>
            <person name="Walsh S.V."/>
            <person name="Warren T."/>
            <person name="Whitehead S."/>
            <person name="Woodward J.R."/>
            <person name="Volckaert G."/>
            <person name="Aert R."/>
            <person name="Robben J."/>
            <person name="Grymonprez B."/>
            <person name="Weltjens I."/>
            <person name="Vanstreels E."/>
            <person name="Rieger M."/>
            <person name="Schaefer M."/>
            <person name="Mueller-Auer S."/>
            <person name="Gabel C."/>
            <person name="Fuchs M."/>
            <person name="Duesterhoeft A."/>
            <person name="Fritzc C."/>
            <person name="Holzer E."/>
            <person name="Moestl D."/>
            <person name="Hilbert H."/>
            <person name="Borzym K."/>
            <person name="Langer I."/>
            <person name="Beck A."/>
            <person name="Lehrach H."/>
            <person name="Reinhardt R."/>
            <person name="Pohl T.M."/>
            <person name="Eger P."/>
            <person name="Zimmermann W."/>
            <person name="Wedler H."/>
            <person name="Wambutt R."/>
            <person name="Purnelle B."/>
            <person name="Goffeau A."/>
            <person name="Cadieu E."/>
            <person name="Dreano S."/>
            <person name="Gloux S."/>
            <person name="Lelaure V."/>
            <person name="Mottier S."/>
            <person name="Galibert F."/>
            <person name="Aves S.J."/>
            <person name="Xiang Z."/>
            <person name="Hunt C."/>
            <person name="Moore K."/>
            <person name="Hurst S.M."/>
            <person name="Lucas M."/>
            <person name="Rochet M."/>
            <person name="Gaillardin C."/>
            <person name="Tallada V.A."/>
            <person name="Garzon A."/>
            <person name="Thode G."/>
            <person name="Daga R.R."/>
            <person name="Cruzado L."/>
            <person name="Jimenez J."/>
            <person name="Sanchez M."/>
            <person name="del Rey F."/>
            <person name="Benito J."/>
            <person name="Dominguez A."/>
            <person name="Revuelta J.L."/>
            <person name="Moreno S."/>
            <person name="Armstrong J."/>
            <person name="Forsburg S.L."/>
            <person name="Cerutti L."/>
            <person name="Lowe T."/>
            <person name="McCombie W.R."/>
            <person name="Paulsen I."/>
            <person name="Potashkin J."/>
            <person name="Shpakovski G.V."/>
            <person name="Ussery D."/>
            <person name="Barrell B.G."/>
            <person name="Nurse P."/>
        </authorList>
    </citation>
    <scope>NUCLEOTIDE SEQUENCE [LARGE SCALE GENOMIC DNA]</scope>
    <source>
        <strain>972 / ATCC 24843</strain>
    </source>
</reference>
<organism>
    <name type="scientific">Schizosaccharomyces pombe (strain 972 / ATCC 24843)</name>
    <name type="common">Fission yeast</name>
    <dbReference type="NCBI Taxonomy" id="284812"/>
    <lineage>
        <taxon>Eukaryota</taxon>
        <taxon>Fungi</taxon>
        <taxon>Dikarya</taxon>
        <taxon>Ascomycota</taxon>
        <taxon>Taphrinomycotina</taxon>
        <taxon>Schizosaccharomycetes</taxon>
        <taxon>Schizosaccharomycetales</taxon>
        <taxon>Schizosaccharomycetaceae</taxon>
        <taxon>Schizosaccharomyces</taxon>
    </lineage>
</organism>
<comment type="catalytic activity">
    <reaction>
        <text>tRNA(Lys) + L-lysine + ATP = L-lysyl-tRNA(Lys) + AMP + diphosphate</text>
        <dbReference type="Rhea" id="RHEA:20792"/>
        <dbReference type="Rhea" id="RHEA-COMP:9696"/>
        <dbReference type="Rhea" id="RHEA-COMP:9697"/>
        <dbReference type="ChEBI" id="CHEBI:30616"/>
        <dbReference type="ChEBI" id="CHEBI:32551"/>
        <dbReference type="ChEBI" id="CHEBI:33019"/>
        <dbReference type="ChEBI" id="CHEBI:78442"/>
        <dbReference type="ChEBI" id="CHEBI:78529"/>
        <dbReference type="ChEBI" id="CHEBI:456215"/>
        <dbReference type="EC" id="6.1.1.6"/>
    </reaction>
</comment>
<comment type="subunit">
    <text evidence="1">Homodimer.</text>
</comment>
<comment type="subcellular location">
    <subcellularLocation>
        <location evidence="1">Cytoplasm</location>
    </subcellularLocation>
</comment>
<comment type="similarity">
    <text evidence="3">Belongs to the class-II aminoacyl-tRNA synthetase family.</text>
</comment>